<reference key="1">
    <citation type="journal article" date="2011" name="Stand. Genomic Sci.">
        <title>Complete genome sequence of the halophilic and highly halotolerant Chromohalobacter salexigens type strain (1H11(T)).</title>
        <authorList>
            <person name="Copeland A."/>
            <person name="O'Connor K."/>
            <person name="Lucas S."/>
            <person name="Lapidus A."/>
            <person name="Berry K.W."/>
            <person name="Detter J.C."/>
            <person name="Del Rio T.G."/>
            <person name="Hammon N."/>
            <person name="Dalin E."/>
            <person name="Tice H."/>
            <person name="Pitluck S."/>
            <person name="Bruce D."/>
            <person name="Goodwin L."/>
            <person name="Han C."/>
            <person name="Tapia R."/>
            <person name="Saunders E."/>
            <person name="Schmutz J."/>
            <person name="Brettin T."/>
            <person name="Larimer F."/>
            <person name="Land M."/>
            <person name="Hauser L."/>
            <person name="Vargas C."/>
            <person name="Nieto J.J."/>
            <person name="Kyrpides N.C."/>
            <person name="Ivanova N."/>
            <person name="Goker M."/>
            <person name="Klenk H.P."/>
            <person name="Csonka L.N."/>
            <person name="Woyke T."/>
        </authorList>
    </citation>
    <scope>NUCLEOTIDE SEQUENCE [LARGE SCALE GENOMIC DNA]</scope>
    <source>
        <strain>ATCC BAA-138 / DSM 3043 / CIP 106854 / NCIMB 13768 / 1H11</strain>
    </source>
</reference>
<comment type="function">
    <text evidence="1">Can catalyze the hydrolysis of ATP in the presence of single-stranded DNA, the ATP-dependent uptake of single-stranded DNA by duplex DNA, and the ATP-dependent hybridization of homologous single-stranded DNAs. It interacts with LexA causing its activation and leading to its autocatalytic cleavage.</text>
</comment>
<comment type="subcellular location">
    <subcellularLocation>
        <location evidence="1">Cytoplasm</location>
    </subcellularLocation>
</comment>
<comment type="similarity">
    <text evidence="1">Belongs to the RecA family.</text>
</comment>
<protein>
    <recommendedName>
        <fullName evidence="1">Protein RecA</fullName>
    </recommendedName>
    <alternativeName>
        <fullName evidence="1">Recombinase A</fullName>
    </alternativeName>
</protein>
<evidence type="ECO:0000255" key="1">
    <source>
        <dbReference type="HAMAP-Rule" id="MF_00268"/>
    </source>
</evidence>
<evidence type="ECO:0000256" key="2">
    <source>
        <dbReference type="SAM" id="MobiDB-lite"/>
    </source>
</evidence>
<dbReference type="EMBL" id="CP000285">
    <property type="protein sequence ID" value="ABE57985.1"/>
    <property type="molecule type" value="Genomic_DNA"/>
</dbReference>
<dbReference type="RefSeq" id="WP_011505931.1">
    <property type="nucleotide sequence ID" value="NC_007963.1"/>
</dbReference>
<dbReference type="SMR" id="Q1QZX3"/>
<dbReference type="STRING" id="290398.Csal_0623"/>
<dbReference type="GeneID" id="95333378"/>
<dbReference type="KEGG" id="csa:Csal_0623"/>
<dbReference type="eggNOG" id="COG0468">
    <property type="taxonomic scope" value="Bacteria"/>
</dbReference>
<dbReference type="HOGENOM" id="CLU_040469_3_2_6"/>
<dbReference type="OrthoDB" id="9776733at2"/>
<dbReference type="Proteomes" id="UP000000239">
    <property type="component" value="Chromosome"/>
</dbReference>
<dbReference type="GO" id="GO:0005829">
    <property type="term" value="C:cytosol"/>
    <property type="evidence" value="ECO:0007669"/>
    <property type="project" value="TreeGrafter"/>
</dbReference>
<dbReference type="GO" id="GO:0005524">
    <property type="term" value="F:ATP binding"/>
    <property type="evidence" value="ECO:0007669"/>
    <property type="project" value="UniProtKB-UniRule"/>
</dbReference>
<dbReference type="GO" id="GO:0016887">
    <property type="term" value="F:ATP hydrolysis activity"/>
    <property type="evidence" value="ECO:0007669"/>
    <property type="project" value="InterPro"/>
</dbReference>
<dbReference type="GO" id="GO:0140664">
    <property type="term" value="F:ATP-dependent DNA damage sensor activity"/>
    <property type="evidence" value="ECO:0007669"/>
    <property type="project" value="InterPro"/>
</dbReference>
<dbReference type="GO" id="GO:0003684">
    <property type="term" value="F:damaged DNA binding"/>
    <property type="evidence" value="ECO:0007669"/>
    <property type="project" value="UniProtKB-UniRule"/>
</dbReference>
<dbReference type="GO" id="GO:0003697">
    <property type="term" value="F:single-stranded DNA binding"/>
    <property type="evidence" value="ECO:0007669"/>
    <property type="project" value="UniProtKB-UniRule"/>
</dbReference>
<dbReference type="GO" id="GO:0006310">
    <property type="term" value="P:DNA recombination"/>
    <property type="evidence" value="ECO:0007669"/>
    <property type="project" value="UniProtKB-UniRule"/>
</dbReference>
<dbReference type="GO" id="GO:0006281">
    <property type="term" value="P:DNA repair"/>
    <property type="evidence" value="ECO:0007669"/>
    <property type="project" value="UniProtKB-UniRule"/>
</dbReference>
<dbReference type="GO" id="GO:0009432">
    <property type="term" value="P:SOS response"/>
    <property type="evidence" value="ECO:0007669"/>
    <property type="project" value="UniProtKB-UniRule"/>
</dbReference>
<dbReference type="CDD" id="cd00983">
    <property type="entry name" value="RecA"/>
    <property type="match status" value="1"/>
</dbReference>
<dbReference type="FunFam" id="3.40.50.300:FF:000087">
    <property type="entry name" value="Recombinase RecA"/>
    <property type="match status" value="1"/>
</dbReference>
<dbReference type="Gene3D" id="3.40.50.300">
    <property type="entry name" value="P-loop containing nucleotide triphosphate hydrolases"/>
    <property type="match status" value="1"/>
</dbReference>
<dbReference type="HAMAP" id="MF_00268">
    <property type="entry name" value="RecA"/>
    <property type="match status" value="1"/>
</dbReference>
<dbReference type="InterPro" id="IPR003593">
    <property type="entry name" value="AAA+_ATPase"/>
</dbReference>
<dbReference type="InterPro" id="IPR013765">
    <property type="entry name" value="DNA_recomb/repair_RecA"/>
</dbReference>
<dbReference type="InterPro" id="IPR020584">
    <property type="entry name" value="DNA_recomb/repair_RecA_CS"/>
</dbReference>
<dbReference type="InterPro" id="IPR027417">
    <property type="entry name" value="P-loop_NTPase"/>
</dbReference>
<dbReference type="InterPro" id="IPR049261">
    <property type="entry name" value="RecA-like_C"/>
</dbReference>
<dbReference type="InterPro" id="IPR049428">
    <property type="entry name" value="RecA-like_N"/>
</dbReference>
<dbReference type="InterPro" id="IPR020588">
    <property type="entry name" value="RecA_ATP-bd"/>
</dbReference>
<dbReference type="InterPro" id="IPR023400">
    <property type="entry name" value="RecA_C_sf"/>
</dbReference>
<dbReference type="InterPro" id="IPR020587">
    <property type="entry name" value="RecA_monomer-monomer_interface"/>
</dbReference>
<dbReference type="NCBIfam" id="TIGR02012">
    <property type="entry name" value="tigrfam_recA"/>
    <property type="match status" value="1"/>
</dbReference>
<dbReference type="PANTHER" id="PTHR45900:SF1">
    <property type="entry name" value="MITOCHONDRIAL DNA REPAIR PROTEIN RECA HOMOLOG-RELATED"/>
    <property type="match status" value="1"/>
</dbReference>
<dbReference type="PANTHER" id="PTHR45900">
    <property type="entry name" value="RECA"/>
    <property type="match status" value="1"/>
</dbReference>
<dbReference type="Pfam" id="PF00154">
    <property type="entry name" value="RecA"/>
    <property type="match status" value="1"/>
</dbReference>
<dbReference type="Pfam" id="PF21096">
    <property type="entry name" value="RecA_C"/>
    <property type="match status" value="1"/>
</dbReference>
<dbReference type="PRINTS" id="PR00142">
    <property type="entry name" value="RECA"/>
</dbReference>
<dbReference type="SMART" id="SM00382">
    <property type="entry name" value="AAA"/>
    <property type="match status" value="1"/>
</dbReference>
<dbReference type="SUPFAM" id="SSF52540">
    <property type="entry name" value="P-loop containing nucleoside triphosphate hydrolases"/>
    <property type="match status" value="1"/>
</dbReference>
<dbReference type="SUPFAM" id="SSF54752">
    <property type="entry name" value="RecA protein, C-terminal domain"/>
    <property type="match status" value="1"/>
</dbReference>
<dbReference type="PROSITE" id="PS00321">
    <property type="entry name" value="RECA_1"/>
    <property type="match status" value="1"/>
</dbReference>
<dbReference type="PROSITE" id="PS50162">
    <property type="entry name" value="RECA_2"/>
    <property type="match status" value="1"/>
</dbReference>
<dbReference type="PROSITE" id="PS50163">
    <property type="entry name" value="RECA_3"/>
    <property type="match status" value="1"/>
</dbReference>
<feature type="chain" id="PRO_1000071892" description="Protein RecA">
    <location>
        <begin position="1"/>
        <end position="352"/>
    </location>
</feature>
<feature type="region of interest" description="Disordered" evidence="2">
    <location>
        <begin position="330"/>
        <end position="352"/>
    </location>
</feature>
<feature type="binding site" evidence="1">
    <location>
        <begin position="67"/>
        <end position="74"/>
    </location>
    <ligand>
        <name>ATP</name>
        <dbReference type="ChEBI" id="CHEBI:30616"/>
    </ligand>
</feature>
<keyword id="KW-0067">ATP-binding</keyword>
<keyword id="KW-0963">Cytoplasm</keyword>
<keyword id="KW-0227">DNA damage</keyword>
<keyword id="KW-0233">DNA recombination</keyword>
<keyword id="KW-0234">DNA repair</keyword>
<keyword id="KW-0238">DNA-binding</keyword>
<keyword id="KW-0547">Nucleotide-binding</keyword>
<keyword id="KW-1185">Reference proteome</keyword>
<keyword id="KW-0742">SOS response</keyword>
<proteinExistence type="inferred from homology"/>
<sequence>MAQDDNRSKALNAALSQIERQFGKGAVMRLGDTPRVATPAISTGSLGLDIALGVGGLPMGRVVEIFGPESSGKTTMTLSVIAQGQKQGKTCAFIDAEHALDPTYAEKLGVNLDDLLVSQPDTGEQALEICDMLVRSGGVDVIVVDSVAALTPRAEIEGEMGDSHVGLQARLMSQALRKVTGNIKNANCMVMFVNQIRMKIGVMFGNPETTTGGNALKFYSSVRLDIRRTGSVKQGDEAIGNETRVKVVKNKVAPPFRQAEFQILYGKGIYHAGEVVDIGVQQGLVDKAGAWYSYQGNKIGQGKANAAQFLEDNPAIMEEIENEIRARLLSTPKPEAESQEKAAAAQDDDSLV</sequence>
<name>RECA_CHRSD</name>
<gene>
    <name evidence="1" type="primary">recA</name>
    <name type="ordered locus">Csal_0623</name>
</gene>
<accession>Q1QZX3</accession>
<organism>
    <name type="scientific">Chromohalobacter salexigens (strain ATCC BAA-138 / DSM 3043 / CIP 106854 / NCIMB 13768 / 1H11)</name>
    <dbReference type="NCBI Taxonomy" id="290398"/>
    <lineage>
        <taxon>Bacteria</taxon>
        <taxon>Pseudomonadati</taxon>
        <taxon>Pseudomonadota</taxon>
        <taxon>Gammaproteobacteria</taxon>
        <taxon>Oceanospirillales</taxon>
        <taxon>Halomonadaceae</taxon>
        <taxon>Chromohalobacter</taxon>
    </lineage>
</organism>